<dbReference type="EC" id="2.1.2.1" evidence="1"/>
<dbReference type="EMBL" id="CP001393">
    <property type="protein sequence ID" value="ACM60161.1"/>
    <property type="molecule type" value="Genomic_DNA"/>
</dbReference>
<dbReference type="RefSeq" id="WP_015907573.1">
    <property type="nucleotide sequence ID" value="NC_012034.1"/>
</dbReference>
<dbReference type="SMR" id="B9MR57"/>
<dbReference type="STRING" id="521460.Athe_1060"/>
<dbReference type="GeneID" id="31772411"/>
<dbReference type="KEGG" id="ate:Athe_1060"/>
<dbReference type="eggNOG" id="COG0112">
    <property type="taxonomic scope" value="Bacteria"/>
</dbReference>
<dbReference type="HOGENOM" id="CLU_022477_2_1_9"/>
<dbReference type="UniPathway" id="UPA00193"/>
<dbReference type="UniPathway" id="UPA00288">
    <property type="reaction ID" value="UER01023"/>
</dbReference>
<dbReference type="Proteomes" id="UP000007723">
    <property type="component" value="Chromosome"/>
</dbReference>
<dbReference type="GO" id="GO:0005829">
    <property type="term" value="C:cytosol"/>
    <property type="evidence" value="ECO:0007669"/>
    <property type="project" value="TreeGrafter"/>
</dbReference>
<dbReference type="GO" id="GO:0004372">
    <property type="term" value="F:glycine hydroxymethyltransferase activity"/>
    <property type="evidence" value="ECO:0007669"/>
    <property type="project" value="UniProtKB-UniRule"/>
</dbReference>
<dbReference type="GO" id="GO:0030170">
    <property type="term" value="F:pyridoxal phosphate binding"/>
    <property type="evidence" value="ECO:0007669"/>
    <property type="project" value="UniProtKB-UniRule"/>
</dbReference>
<dbReference type="GO" id="GO:0019264">
    <property type="term" value="P:glycine biosynthetic process from serine"/>
    <property type="evidence" value="ECO:0007669"/>
    <property type="project" value="UniProtKB-UniRule"/>
</dbReference>
<dbReference type="GO" id="GO:0035999">
    <property type="term" value="P:tetrahydrofolate interconversion"/>
    <property type="evidence" value="ECO:0007669"/>
    <property type="project" value="UniProtKB-UniRule"/>
</dbReference>
<dbReference type="CDD" id="cd00378">
    <property type="entry name" value="SHMT"/>
    <property type="match status" value="1"/>
</dbReference>
<dbReference type="FunFam" id="3.40.640.10:FF:000001">
    <property type="entry name" value="Serine hydroxymethyltransferase"/>
    <property type="match status" value="1"/>
</dbReference>
<dbReference type="FunFam" id="3.90.1150.10:FF:000003">
    <property type="entry name" value="Serine hydroxymethyltransferase"/>
    <property type="match status" value="1"/>
</dbReference>
<dbReference type="Gene3D" id="3.90.1150.10">
    <property type="entry name" value="Aspartate Aminotransferase, domain 1"/>
    <property type="match status" value="1"/>
</dbReference>
<dbReference type="Gene3D" id="3.40.640.10">
    <property type="entry name" value="Type I PLP-dependent aspartate aminotransferase-like (Major domain)"/>
    <property type="match status" value="1"/>
</dbReference>
<dbReference type="HAMAP" id="MF_00051">
    <property type="entry name" value="SHMT"/>
    <property type="match status" value="1"/>
</dbReference>
<dbReference type="InterPro" id="IPR015424">
    <property type="entry name" value="PyrdxlP-dep_Trfase"/>
</dbReference>
<dbReference type="InterPro" id="IPR015421">
    <property type="entry name" value="PyrdxlP-dep_Trfase_major"/>
</dbReference>
<dbReference type="InterPro" id="IPR015422">
    <property type="entry name" value="PyrdxlP-dep_Trfase_small"/>
</dbReference>
<dbReference type="InterPro" id="IPR001085">
    <property type="entry name" value="Ser_HO-MeTrfase"/>
</dbReference>
<dbReference type="InterPro" id="IPR049943">
    <property type="entry name" value="Ser_HO-MeTrfase-like"/>
</dbReference>
<dbReference type="InterPro" id="IPR019798">
    <property type="entry name" value="Ser_HO-MeTrfase_PLP_BS"/>
</dbReference>
<dbReference type="InterPro" id="IPR039429">
    <property type="entry name" value="SHMT-like_dom"/>
</dbReference>
<dbReference type="NCBIfam" id="NF000586">
    <property type="entry name" value="PRK00011.1"/>
    <property type="match status" value="1"/>
</dbReference>
<dbReference type="PANTHER" id="PTHR11680">
    <property type="entry name" value="SERINE HYDROXYMETHYLTRANSFERASE"/>
    <property type="match status" value="1"/>
</dbReference>
<dbReference type="PANTHER" id="PTHR11680:SF35">
    <property type="entry name" value="SERINE HYDROXYMETHYLTRANSFERASE 1"/>
    <property type="match status" value="1"/>
</dbReference>
<dbReference type="Pfam" id="PF00464">
    <property type="entry name" value="SHMT"/>
    <property type="match status" value="1"/>
</dbReference>
<dbReference type="PIRSF" id="PIRSF000412">
    <property type="entry name" value="SHMT"/>
    <property type="match status" value="1"/>
</dbReference>
<dbReference type="SUPFAM" id="SSF53383">
    <property type="entry name" value="PLP-dependent transferases"/>
    <property type="match status" value="1"/>
</dbReference>
<dbReference type="PROSITE" id="PS00096">
    <property type="entry name" value="SHMT"/>
    <property type="match status" value="1"/>
</dbReference>
<reference key="1">
    <citation type="submission" date="2009-01" db="EMBL/GenBank/DDBJ databases">
        <title>Complete sequence of chromosome of Caldicellulosiruptor becscii DSM 6725.</title>
        <authorList>
            <person name="Lucas S."/>
            <person name="Copeland A."/>
            <person name="Lapidus A."/>
            <person name="Glavina del Rio T."/>
            <person name="Tice H."/>
            <person name="Bruce D."/>
            <person name="Goodwin L."/>
            <person name="Pitluck S."/>
            <person name="Sims D."/>
            <person name="Meincke L."/>
            <person name="Brettin T."/>
            <person name="Detter J.C."/>
            <person name="Han C."/>
            <person name="Larimer F."/>
            <person name="Land M."/>
            <person name="Hauser L."/>
            <person name="Kyrpides N."/>
            <person name="Ovchinnikova G."/>
            <person name="Kataeva I."/>
            <person name="Adams M.W.W."/>
        </authorList>
    </citation>
    <scope>NUCLEOTIDE SEQUENCE [LARGE SCALE GENOMIC DNA]</scope>
    <source>
        <strain>ATCC BAA-1888 / DSM 6725 / KCTC 15123 / Z-1320</strain>
    </source>
</reference>
<gene>
    <name evidence="1" type="primary">glyA</name>
    <name type="ordered locus">Athe_1060</name>
</gene>
<comment type="function">
    <text evidence="1">Catalyzes the reversible interconversion of serine and glycine with tetrahydrofolate (THF) serving as the one-carbon carrier. This reaction serves as the major source of one-carbon groups required for the biosynthesis of purines, thymidylate, methionine, and other important biomolecules. Also exhibits THF-independent aldolase activity toward beta-hydroxyamino acids, producing glycine and aldehydes, via a retro-aldol mechanism.</text>
</comment>
<comment type="catalytic activity">
    <reaction evidence="1">
        <text>(6R)-5,10-methylene-5,6,7,8-tetrahydrofolate + glycine + H2O = (6S)-5,6,7,8-tetrahydrofolate + L-serine</text>
        <dbReference type="Rhea" id="RHEA:15481"/>
        <dbReference type="ChEBI" id="CHEBI:15377"/>
        <dbReference type="ChEBI" id="CHEBI:15636"/>
        <dbReference type="ChEBI" id="CHEBI:33384"/>
        <dbReference type="ChEBI" id="CHEBI:57305"/>
        <dbReference type="ChEBI" id="CHEBI:57453"/>
        <dbReference type="EC" id="2.1.2.1"/>
    </reaction>
</comment>
<comment type="cofactor">
    <cofactor evidence="1">
        <name>pyridoxal 5'-phosphate</name>
        <dbReference type="ChEBI" id="CHEBI:597326"/>
    </cofactor>
</comment>
<comment type="pathway">
    <text evidence="1">One-carbon metabolism; tetrahydrofolate interconversion.</text>
</comment>
<comment type="pathway">
    <text evidence="1">Amino-acid biosynthesis; glycine biosynthesis; glycine from L-serine: step 1/1.</text>
</comment>
<comment type="subunit">
    <text evidence="1">Homodimer.</text>
</comment>
<comment type="subcellular location">
    <subcellularLocation>
        <location evidence="1">Cytoplasm</location>
    </subcellularLocation>
</comment>
<comment type="similarity">
    <text evidence="1">Belongs to the SHMT family.</text>
</comment>
<keyword id="KW-0028">Amino-acid biosynthesis</keyword>
<keyword id="KW-0963">Cytoplasm</keyword>
<keyword id="KW-0554">One-carbon metabolism</keyword>
<keyword id="KW-0663">Pyridoxal phosphate</keyword>
<keyword id="KW-0808">Transferase</keyword>
<sequence>MYFYNLVKNTDPEIAEAIKSELKRQQNKIELIASENFVSIAVMAAMGSPLTNKYAEGYPGKRYYGGCEYIDVVESIAIERAKKLFGAEHANVQPHSGAQANMAVYFAVLNPGDTILGMNLSHGGHLTHGSPVNFSGKLYNIISYGVDPETETINYDEVLKLAKEHRPKLILAGASAYPRVIDFKKFREIADEVGAYLMVDMAHIAGLVAAGLHPSPVEYADFVTTTTHKTLRGPRGGLILCKEKYAKLIDKSIFPGIQGGPLEHVIAAKAVALKEAMTEEFKNYQVQILKNAKALSTRLIERGFRLVSGGTDNHLMLVDLRNKGITGKDAEKILDEHNITCNKNAVPFDTQSPMITSGIRLGTPAVTTRGFKEGDMLEVADIIHDALTNSDTKENILIRVKALCEKHPLYKEFDE</sequence>
<feature type="chain" id="PRO_1000195426" description="Serine hydroxymethyltransferase">
    <location>
        <begin position="1"/>
        <end position="415"/>
    </location>
</feature>
<feature type="binding site" evidence="1">
    <location>
        <position position="120"/>
    </location>
    <ligand>
        <name>(6S)-5,6,7,8-tetrahydrofolate</name>
        <dbReference type="ChEBI" id="CHEBI:57453"/>
    </ligand>
</feature>
<feature type="binding site" evidence="1">
    <location>
        <begin position="124"/>
        <end position="126"/>
    </location>
    <ligand>
        <name>(6S)-5,6,7,8-tetrahydrofolate</name>
        <dbReference type="ChEBI" id="CHEBI:57453"/>
    </ligand>
</feature>
<feature type="site" description="Plays an important role in substrate specificity" evidence="1">
    <location>
        <position position="228"/>
    </location>
</feature>
<feature type="modified residue" description="N6-(pyridoxal phosphate)lysine" evidence="1">
    <location>
        <position position="229"/>
    </location>
</feature>
<accession>B9MR57</accession>
<evidence type="ECO:0000255" key="1">
    <source>
        <dbReference type="HAMAP-Rule" id="MF_00051"/>
    </source>
</evidence>
<proteinExistence type="inferred from homology"/>
<name>GLYA_CALBD</name>
<organism>
    <name type="scientific">Caldicellulosiruptor bescii (strain ATCC BAA-1888 / DSM 6725 / KCTC 15123 / Z-1320)</name>
    <name type="common">Anaerocellum thermophilum</name>
    <dbReference type="NCBI Taxonomy" id="521460"/>
    <lineage>
        <taxon>Bacteria</taxon>
        <taxon>Bacillati</taxon>
        <taxon>Bacillota</taxon>
        <taxon>Bacillota incertae sedis</taxon>
        <taxon>Caldicellulosiruptorales</taxon>
        <taxon>Caldicellulosiruptoraceae</taxon>
        <taxon>Caldicellulosiruptor</taxon>
    </lineage>
</organism>
<protein>
    <recommendedName>
        <fullName evidence="1">Serine hydroxymethyltransferase</fullName>
        <shortName evidence="1">SHMT</shortName>
        <shortName evidence="1">Serine methylase</shortName>
        <ecNumber evidence="1">2.1.2.1</ecNumber>
    </recommendedName>
</protein>